<dbReference type="EMBL" id="M81085">
    <property type="protein sequence ID" value="AAA29886.1"/>
    <property type="molecule type" value="mRNA"/>
</dbReference>
<dbReference type="PIR" id="A42964">
    <property type="entry name" value="A42964"/>
</dbReference>
<dbReference type="RefSeq" id="XP_018644269.1">
    <property type="nucleotide sequence ID" value="XM_018792763.1"/>
</dbReference>
<dbReference type="SMR" id="P30669"/>
<dbReference type="FunCoup" id="P30669">
    <property type="interactions" value="478"/>
</dbReference>
<dbReference type="STRING" id="6183.P30669"/>
<dbReference type="GeneID" id="8349413"/>
<dbReference type="KEGG" id="smm:Smp_059340.1"/>
<dbReference type="CTD" id="8349413"/>
<dbReference type="eggNOG" id="KOG0099">
    <property type="taxonomic scope" value="Eukaryota"/>
</dbReference>
<dbReference type="HOGENOM" id="CLU_014184_3_0_1"/>
<dbReference type="InParanoid" id="P30669"/>
<dbReference type="OMA" id="DHVAKCW"/>
<dbReference type="OrthoDB" id="5817230at2759"/>
<dbReference type="PhylomeDB" id="P30669"/>
<dbReference type="Proteomes" id="UP000008854">
    <property type="component" value="Unassembled WGS sequence"/>
</dbReference>
<dbReference type="GO" id="GO:0005737">
    <property type="term" value="C:cytoplasm"/>
    <property type="evidence" value="ECO:0007669"/>
    <property type="project" value="TreeGrafter"/>
</dbReference>
<dbReference type="GO" id="GO:0005834">
    <property type="term" value="C:heterotrimeric G-protein complex"/>
    <property type="evidence" value="ECO:0007669"/>
    <property type="project" value="TreeGrafter"/>
</dbReference>
<dbReference type="GO" id="GO:0001664">
    <property type="term" value="F:G protein-coupled receptor binding"/>
    <property type="evidence" value="ECO:0007669"/>
    <property type="project" value="TreeGrafter"/>
</dbReference>
<dbReference type="GO" id="GO:0031683">
    <property type="term" value="F:G-protein beta/gamma-subunit complex binding"/>
    <property type="evidence" value="ECO:0007669"/>
    <property type="project" value="InterPro"/>
</dbReference>
<dbReference type="GO" id="GO:0005525">
    <property type="term" value="F:GTP binding"/>
    <property type="evidence" value="ECO:0007669"/>
    <property type="project" value="UniProtKB-KW"/>
</dbReference>
<dbReference type="GO" id="GO:0003924">
    <property type="term" value="F:GTPase activity"/>
    <property type="evidence" value="ECO:0007669"/>
    <property type="project" value="InterPro"/>
</dbReference>
<dbReference type="GO" id="GO:0046872">
    <property type="term" value="F:metal ion binding"/>
    <property type="evidence" value="ECO:0007669"/>
    <property type="project" value="UniProtKB-KW"/>
</dbReference>
<dbReference type="GO" id="GO:0007191">
    <property type="term" value="P:adenylate cyclase-activating dopamine receptor signaling pathway"/>
    <property type="evidence" value="ECO:0007669"/>
    <property type="project" value="TreeGrafter"/>
</dbReference>
<dbReference type="GO" id="GO:0007606">
    <property type="term" value="P:sensory perception of chemical stimulus"/>
    <property type="evidence" value="ECO:0007669"/>
    <property type="project" value="TreeGrafter"/>
</dbReference>
<dbReference type="CDD" id="cd00066">
    <property type="entry name" value="G-alpha"/>
    <property type="match status" value="1"/>
</dbReference>
<dbReference type="FunFam" id="1.10.400.10:FF:000003">
    <property type="entry name" value="Guanine nucleotide-binding protein G(S) subunit alpha"/>
    <property type="match status" value="1"/>
</dbReference>
<dbReference type="FunFam" id="3.40.50.300:FF:006178">
    <property type="entry name" value="Guanine nucleotide-binding protein G(s) subunit alpha isoforms short"/>
    <property type="match status" value="1"/>
</dbReference>
<dbReference type="Gene3D" id="1.10.400.10">
    <property type="entry name" value="GI Alpha 1, domain 2-like"/>
    <property type="match status" value="1"/>
</dbReference>
<dbReference type="Gene3D" id="3.40.50.300">
    <property type="entry name" value="P-loop containing nucleotide triphosphate hydrolases"/>
    <property type="match status" value="1"/>
</dbReference>
<dbReference type="InterPro" id="IPR000367">
    <property type="entry name" value="Gprotein_alpha_S"/>
</dbReference>
<dbReference type="InterPro" id="IPR001019">
    <property type="entry name" value="Gprotein_alpha_su"/>
</dbReference>
<dbReference type="InterPro" id="IPR011025">
    <property type="entry name" value="GproteinA_insert"/>
</dbReference>
<dbReference type="InterPro" id="IPR027417">
    <property type="entry name" value="P-loop_NTPase"/>
</dbReference>
<dbReference type="PANTHER" id="PTHR10218:SF212">
    <property type="entry name" value="G PROTEIN ALPHA S SUBUNIT"/>
    <property type="match status" value="1"/>
</dbReference>
<dbReference type="PANTHER" id="PTHR10218">
    <property type="entry name" value="GTP-BINDING PROTEIN ALPHA SUBUNIT"/>
    <property type="match status" value="1"/>
</dbReference>
<dbReference type="Pfam" id="PF00503">
    <property type="entry name" value="G-alpha"/>
    <property type="match status" value="1"/>
</dbReference>
<dbReference type="PRINTS" id="PR00318">
    <property type="entry name" value="GPROTEINA"/>
</dbReference>
<dbReference type="PRINTS" id="PR00443">
    <property type="entry name" value="GPROTEINAS"/>
</dbReference>
<dbReference type="SMART" id="SM00275">
    <property type="entry name" value="G_alpha"/>
    <property type="match status" value="1"/>
</dbReference>
<dbReference type="SUPFAM" id="SSF52540">
    <property type="entry name" value="P-loop containing nucleoside triphosphate hydrolases"/>
    <property type="match status" value="1"/>
</dbReference>
<dbReference type="SUPFAM" id="SSF47895">
    <property type="entry name" value="Transducin (alpha subunit), insertion domain"/>
    <property type="match status" value="1"/>
</dbReference>
<dbReference type="PROSITE" id="PS51882">
    <property type="entry name" value="G_ALPHA"/>
    <property type="match status" value="1"/>
</dbReference>
<accession>P30669</accession>
<protein>
    <recommendedName>
        <fullName>Guanine nucleotide-binding protein G(s) subunit alpha</fullName>
    </recommendedName>
    <alternativeName>
        <fullName>Adenylate cyclase-stimulating G alpha protein</fullName>
    </alternativeName>
</protein>
<proteinExistence type="evidence at transcript level"/>
<name>GNAS_SCHMA</name>
<evidence type="ECO:0000250" key="1"/>
<evidence type="ECO:0000255" key="2">
    <source>
        <dbReference type="PROSITE-ProRule" id="PRU01230"/>
    </source>
</evidence>
<evidence type="ECO:0000305" key="3"/>
<organism>
    <name type="scientific">Schistosoma mansoni</name>
    <name type="common">Blood fluke</name>
    <dbReference type="NCBI Taxonomy" id="6183"/>
    <lineage>
        <taxon>Eukaryota</taxon>
        <taxon>Metazoa</taxon>
        <taxon>Spiralia</taxon>
        <taxon>Lophotrochozoa</taxon>
        <taxon>Platyhelminthes</taxon>
        <taxon>Trematoda</taxon>
        <taxon>Digenea</taxon>
        <taxon>Strigeidida</taxon>
        <taxon>Schistosomatoidea</taxon>
        <taxon>Schistosomatidae</taxon>
        <taxon>Schistosoma</taxon>
    </lineage>
</organism>
<reference key="1">
    <citation type="journal article" date="1992" name="J. Biol. Chem.">
        <title>Cloning and characterization of a cDNA coding for the alpha-subunit of a stimulatory G protein from Schistosoma mansoni.</title>
        <authorList>
            <person name="Iltzsch M.H."/>
            <person name="Bieber D."/>
            <person name="Vijayasarathy S."/>
            <person name="Webster P."/>
            <person name="Zurita M."/>
            <person name="Ding J."/>
            <person name="Mansour T.E."/>
        </authorList>
    </citation>
    <scope>NUCLEOTIDE SEQUENCE [MRNA]</scope>
</reference>
<keyword id="KW-0342">GTP-binding</keyword>
<keyword id="KW-0460">Magnesium</keyword>
<keyword id="KW-0479">Metal-binding</keyword>
<keyword id="KW-0547">Nucleotide-binding</keyword>
<keyword id="KW-1185">Reference proteome</keyword>
<keyword id="KW-0807">Transducer</keyword>
<sequence length="379" mass="44045">MVIGCCTLNNISEDAKTRSDANKQIEKLIEKEKKNFKSTHRLLLLGAGESGKSTIVKQMRILHIDGFSEREKKEKIDAIRKNLRDAICSIAGAMGSLKPPVKLELSENRKLRDYILETASKPDFDYPPEFFTYCAKLWKDGGIQETFERSNEYQLIDCAKYFLDKALEVGAPNYIPSEQDILRCRVLTSGIFETKFSVDKVNFHMFDVGGQREERRKWIQCFNDVTAIIFVAACSSYNMVLREDPSQNRVKESLELLASIWNNRWLRNISVILFLNKQDLLTEKVLAGKSKIEVYFPHYATYQAPADTLAEYRHENSEVVRARFFFRDEFLKVTSNNNGGRHYCYPHLTCAVDTENIRRVFNDCRDIIQRMHLRQYELL</sequence>
<comment type="function">
    <text>Guanine nucleotide-binding proteins (G proteins) are involved as modulators or transducers in various transmembrane signaling systems. The G(s) protein is involved in hormonal regulation of adenylate cyclase: it activates the cyclase in response to beta-adrenergic stimuli.</text>
</comment>
<comment type="subunit">
    <text>G proteins are composed of 3 units; alpha, beta and gamma. The alpha chain contains the guanine nucleotide binding site.</text>
</comment>
<comment type="similarity">
    <text evidence="3">Belongs to the G-alpha family. G(s) subfamily.</text>
</comment>
<feature type="chain" id="PRO_0000203729" description="Guanine nucleotide-binding protein G(s) subunit alpha">
    <location>
        <begin position="1"/>
        <end position="379"/>
    </location>
</feature>
<feature type="domain" description="G-alpha" evidence="2">
    <location>
        <begin position="38"/>
        <end position="379"/>
    </location>
</feature>
<feature type="region of interest" description="G1 motif" evidence="2">
    <location>
        <begin position="41"/>
        <end position="54"/>
    </location>
</feature>
<feature type="region of interest" description="G2 motif" evidence="2">
    <location>
        <begin position="180"/>
        <end position="188"/>
    </location>
</feature>
<feature type="region of interest" description="G3 motif" evidence="2">
    <location>
        <begin position="203"/>
        <end position="212"/>
    </location>
</feature>
<feature type="region of interest" description="G4 motif" evidence="2">
    <location>
        <begin position="272"/>
        <end position="279"/>
    </location>
</feature>
<feature type="region of interest" description="G5 motif" evidence="2">
    <location>
        <begin position="349"/>
        <end position="354"/>
    </location>
</feature>
<feature type="binding site" evidence="1">
    <location>
        <begin position="46"/>
        <end position="53"/>
    </location>
    <ligand>
        <name>GTP</name>
        <dbReference type="ChEBI" id="CHEBI:37565"/>
    </ligand>
</feature>
<feature type="binding site" evidence="1">
    <location>
        <position position="53"/>
    </location>
    <ligand>
        <name>Mg(2+)</name>
        <dbReference type="ChEBI" id="CHEBI:18420"/>
    </ligand>
</feature>
<feature type="binding site" evidence="1">
    <location>
        <begin position="182"/>
        <end position="188"/>
    </location>
    <ligand>
        <name>GTP</name>
        <dbReference type="ChEBI" id="CHEBI:37565"/>
    </ligand>
</feature>
<feature type="binding site" evidence="1">
    <location>
        <position position="188"/>
    </location>
    <ligand>
        <name>Mg(2+)</name>
        <dbReference type="ChEBI" id="CHEBI:18420"/>
    </ligand>
</feature>
<feature type="binding site" evidence="1">
    <location>
        <begin position="207"/>
        <end position="211"/>
    </location>
    <ligand>
        <name>GTP</name>
        <dbReference type="ChEBI" id="CHEBI:37565"/>
    </ligand>
</feature>
<feature type="binding site" evidence="1">
    <location>
        <begin position="276"/>
        <end position="279"/>
    </location>
    <ligand>
        <name>GTP</name>
        <dbReference type="ChEBI" id="CHEBI:37565"/>
    </ligand>
</feature>
<feature type="binding site" evidence="1">
    <location>
        <position position="351"/>
    </location>
    <ligand>
        <name>GTP</name>
        <dbReference type="ChEBI" id="CHEBI:37565"/>
    </ligand>
</feature>